<reference key="1">
    <citation type="journal article" date="2006" name="J. Bacteriol.">
        <title>Whole-genome sequence of Listeria welshimeri reveals common steps in genome reduction with Listeria innocua as compared to Listeria monocytogenes.</title>
        <authorList>
            <person name="Hain T."/>
            <person name="Steinweg C."/>
            <person name="Kuenne C.T."/>
            <person name="Billion A."/>
            <person name="Ghai R."/>
            <person name="Chatterjee S.S."/>
            <person name="Domann E."/>
            <person name="Kaerst U."/>
            <person name="Goesmann A."/>
            <person name="Bekel T."/>
            <person name="Bartels D."/>
            <person name="Kaiser O."/>
            <person name="Meyer F."/>
            <person name="Puehler A."/>
            <person name="Weisshaar B."/>
            <person name="Wehland J."/>
            <person name="Liang C."/>
            <person name="Dandekar T."/>
            <person name="Lampidis R."/>
            <person name="Kreft J."/>
            <person name="Goebel W."/>
            <person name="Chakraborty T."/>
        </authorList>
    </citation>
    <scope>NUCLEOTIDE SEQUENCE [LARGE SCALE GENOMIC DNA]</scope>
    <source>
        <strain>ATCC 35897 / DSM 20650 / CCUG 15529 / CIP 8149 / NCTC 11857 / SLCC 5334 / V8</strain>
    </source>
</reference>
<protein>
    <recommendedName>
        <fullName evidence="1">Glutamate 5-kinase</fullName>
        <ecNumber evidence="1">2.7.2.11</ecNumber>
    </recommendedName>
    <alternativeName>
        <fullName evidence="1">Gamma-glutamyl kinase</fullName>
        <shortName evidence="1">GK</shortName>
    </alternativeName>
</protein>
<gene>
    <name evidence="1" type="primary">proB</name>
    <name type="ordered locus">lwe1279</name>
</gene>
<evidence type="ECO:0000255" key="1">
    <source>
        <dbReference type="HAMAP-Rule" id="MF_00456"/>
    </source>
</evidence>
<organism>
    <name type="scientific">Listeria welshimeri serovar 6b (strain ATCC 35897 / DSM 20650 / CCUG 15529 / CIP 8149 / NCTC 11857 / SLCC 5334 / V8)</name>
    <dbReference type="NCBI Taxonomy" id="386043"/>
    <lineage>
        <taxon>Bacteria</taxon>
        <taxon>Bacillati</taxon>
        <taxon>Bacillota</taxon>
        <taxon>Bacilli</taxon>
        <taxon>Bacillales</taxon>
        <taxon>Listeriaceae</taxon>
        <taxon>Listeria</taxon>
    </lineage>
</organism>
<sequence>MRESLKNSKRLVIKVGTSTLMYGNGHVNLRTIEKLAMVLSDLRNEGKEVILVSSGAIGVGCHKLQLPARPTDIPDLQAVASVGQSELMHIYSKFFGEYGQVVGQVLLTRDVTDFPISRENVMNTLESLLSRGIIPIVNENDTVAVEELEHVTKYGDNDLLSAIVARLVQADLLIMLSDIDGFYKSNPTTDPNAIMFSEINQITPEIEALAGGRGSKFGTGGMLTKLSAATYCMASHQKMILTNGKNPTIIFDIMQGAQVGTLFANKKEAFSHDRTH</sequence>
<accession>A0AI65</accession>
<feature type="chain" id="PRO_1000081070" description="Glutamate 5-kinase">
    <location>
        <begin position="1"/>
        <end position="276"/>
    </location>
</feature>
<feature type="binding site" evidence="1">
    <location>
        <position position="14"/>
    </location>
    <ligand>
        <name>ATP</name>
        <dbReference type="ChEBI" id="CHEBI:30616"/>
    </ligand>
</feature>
<feature type="binding site" evidence="1">
    <location>
        <position position="54"/>
    </location>
    <ligand>
        <name>substrate</name>
    </ligand>
</feature>
<feature type="binding site" evidence="1">
    <location>
        <position position="141"/>
    </location>
    <ligand>
        <name>substrate</name>
    </ligand>
</feature>
<feature type="binding site" evidence="1">
    <location>
        <position position="157"/>
    </location>
    <ligand>
        <name>substrate</name>
    </ligand>
</feature>
<feature type="binding site" evidence="1">
    <location>
        <begin position="177"/>
        <end position="178"/>
    </location>
    <ligand>
        <name>ATP</name>
        <dbReference type="ChEBI" id="CHEBI:30616"/>
    </ligand>
</feature>
<feature type="binding site" evidence="1">
    <location>
        <begin position="219"/>
        <end position="225"/>
    </location>
    <ligand>
        <name>ATP</name>
        <dbReference type="ChEBI" id="CHEBI:30616"/>
    </ligand>
</feature>
<dbReference type="EC" id="2.7.2.11" evidence="1"/>
<dbReference type="EMBL" id="AM263198">
    <property type="protein sequence ID" value="CAK20697.1"/>
    <property type="molecule type" value="Genomic_DNA"/>
</dbReference>
<dbReference type="RefSeq" id="WP_011702088.1">
    <property type="nucleotide sequence ID" value="NC_008555.1"/>
</dbReference>
<dbReference type="SMR" id="A0AI65"/>
<dbReference type="STRING" id="386043.lwe1279"/>
<dbReference type="GeneID" id="61189156"/>
<dbReference type="KEGG" id="lwe:lwe1279"/>
<dbReference type="eggNOG" id="COG0263">
    <property type="taxonomic scope" value="Bacteria"/>
</dbReference>
<dbReference type="HOGENOM" id="CLU_025400_0_2_9"/>
<dbReference type="OrthoDB" id="9804434at2"/>
<dbReference type="UniPathway" id="UPA00098">
    <property type="reaction ID" value="UER00359"/>
</dbReference>
<dbReference type="Proteomes" id="UP000000779">
    <property type="component" value="Chromosome"/>
</dbReference>
<dbReference type="GO" id="GO:0005829">
    <property type="term" value="C:cytosol"/>
    <property type="evidence" value="ECO:0007669"/>
    <property type="project" value="TreeGrafter"/>
</dbReference>
<dbReference type="GO" id="GO:0005524">
    <property type="term" value="F:ATP binding"/>
    <property type="evidence" value="ECO:0007669"/>
    <property type="project" value="UniProtKB-KW"/>
</dbReference>
<dbReference type="GO" id="GO:0004349">
    <property type="term" value="F:glutamate 5-kinase activity"/>
    <property type="evidence" value="ECO:0007669"/>
    <property type="project" value="UniProtKB-UniRule"/>
</dbReference>
<dbReference type="GO" id="GO:0055129">
    <property type="term" value="P:L-proline biosynthetic process"/>
    <property type="evidence" value="ECO:0007669"/>
    <property type="project" value="UniProtKB-UniRule"/>
</dbReference>
<dbReference type="CDD" id="cd04242">
    <property type="entry name" value="AAK_G5K_ProB"/>
    <property type="match status" value="1"/>
</dbReference>
<dbReference type="FunFam" id="3.40.1160.10:FF:000036">
    <property type="entry name" value="Glutamate 5-kinase"/>
    <property type="match status" value="1"/>
</dbReference>
<dbReference type="Gene3D" id="3.40.1160.10">
    <property type="entry name" value="Acetylglutamate kinase-like"/>
    <property type="match status" value="1"/>
</dbReference>
<dbReference type="HAMAP" id="MF_00456">
    <property type="entry name" value="ProB"/>
    <property type="match status" value="1"/>
</dbReference>
<dbReference type="InterPro" id="IPR036393">
    <property type="entry name" value="AceGlu_kinase-like_sf"/>
</dbReference>
<dbReference type="InterPro" id="IPR001048">
    <property type="entry name" value="Asp/Glu/Uridylate_kinase"/>
</dbReference>
<dbReference type="InterPro" id="IPR041739">
    <property type="entry name" value="G5K_ProB"/>
</dbReference>
<dbReference type="InterPro" id="IPR001057">
    <property type="entry name" value="Glu/AcGlu_kinase"/>
</dbReference>
<dbReference type="InterPro" id="IPR011529">
    <property type="entry name" value="Glu_5kinase"/>
</dbReference>
<dbReference type="InterPro" id="IPR005715">
    <property type="entry name" value="Glu_5kinase/COase_Synthase"/>
</dbReference>
<dbReference type="InterPro" id="IPR019797">
    <property type="entry name" value="Glutamate_5-kinase_CS"/>
</dbReference>
<dbReference type="NCBIfam" id="TIGR01027">
    <property type="entry name" value="proB"/>
    <property type="match status" value="1"/>
</dbReference>
<dbReference type="PANTHER" id="PTHR43654">
    <property type="entry name" value="GLUTAMATE 5-KINASE"/>
    <property type="match status" value="1"/>
</dbReference>
<dbReference type="PANTHER" id="PTHR43654:SF1">
    <property type="entry name" value="ISOPENTENYL PHOSPHATE KINASE"/>
    <property type="match status" value="1"/>
</dbReference>
<dbReference type="Pfam" id="PF00696">
    <property type="entry name" value="AA_kinase"/>
    <property type="match status" value="1"/>
</dbReference>
<dbReference type="PIRSF" id="PIRSF000729">
    <property type="entry name" value="GK"/>
    <property type="match status" value="1"/>
</dbReference>
<dbReference type="PRINTS" id="PR00474">
    <property type="entry name" value="GLU5KINASE"/>
</dbReference>
<dbReference type="SUPFAM" id="SSF53633">
    <property type="entry name" value="Carbamate kinase-like"/>
    <property type="match status" value="1"/>
</dbReference>
<dbReference type="PROSITE" id="PS00902">
    <property type="entry name" value="GLUTAMATE_5_KINASE"/>
    <property type="match status" value="1"/>
</dbReference>
<proteinExistence type="inferred from homology"/>
<comment type="function">
    <text evidence="1">Catalyzes the transfer of a phosphate group to glutamate to form L-glutamate 5-phosphate.</text>
</comment>
<comment type="catalytic activity">
    <reaction evidence="1">
        <text>L-glutamate + ATP = L-glutamyl 5-phosphate + ADP</text>
        <dbReference type="Rhea" id="RHEA:14877"/>
        <dbReference type="ChEBI" id="CHEBI:29985"/>
        <dbReference type="ChEBI" id="CHEBI:30616"/>
        <dbReference type="ChEBI" id="CHEBI:58274"/>
        <dbReference type="ChEBI" id="CHEBI:456216"/>
        <dbReference type="EC" id="2.7.2.11"/>
    </reaction>
</comment>
<comment type="pathway">
    <text evidence="1">Amino-acid biosynthesis; L-proline biosynthesis; L-glutamate 5-semialdehyde from L-glutamate: step 1/2.</text>
</comment>
<comment type="subcellular location">
    <subcellularLocation>
        <location evidence="1">Cytoplasm</location>
    </subcellularLocation>
</comment>
<comment type="similarity">
    <text evidence="1">Belongs to the glutamate 5-kinase family.</text>
</comment>
<name>PROB_LISW6</name>
<keyword id="KW-0028">Amino-acid biosynthesis</keyword>
<keyword id="KW-0067">ATP-binding</keyword>
<keyword id="KW-0963">Cytoplasm</keyword>
<keyword id="KW-0418">Kinase</keyword>
<keyword id="KW-0547">Nucleotide-binding</keyword>
<keyword id="KW-0641">Proline biosynthesis</keyword>
<keyword id="KW-0808">Transferase</keyword>